<reference key="1">
    <citation type="submission" date="2007-06" db="EMBL/GenBank/DDBJ databases">
        <title>Complete sequence of Methanococcus aeolicus Nankai-3.</title>
        <authorList>
            <consortium name="US DOE Joint Genome Institute"/>
            <person name="Copeland A."/>
            <person name="Lucas S."/>
            <person name="Lapidus A."/>
            <person name="Barry K."/>
            <person name="Glavina del Rio T."/>
            <person name="Dalin E."/>
            <person name="Tice H."/>
            <person name="Pitluck S."/>
            <person name="Chain P."/>
            <person name="Malfatti S."/>
            <person name="Shin M."/>
            <person name="Vergez L."/>
            <person name="Schmutz J."/>
            <person name="Larimer F."/>
            <person name="Land M."/>
            <person name="Hauser L."/>
            <person name="Kyrpides N."/>
            <person name="Lykidis A."/>
            <person name="Sieprawska-Lupa M."/>
            <person name="Whitman W.B."/>
            <person name="Richardson P."/>
        </authorList>
    </citation>
    <scope>NUCLEOTIDE SEQUENCE [LARGE SCALE GENOMIC DNA]</scope>
    <source>
        <strain>ATCC BAA-1280 / DSM 17508 / OCM 812 / Nankai-3</strain>
    </source>
</reference>
<protein>
    <recommendedName>
        <fullName evidence="1">7-cyano-7-deazaguanine synthase</fullName>
        <ecNumber evidence="1">6.3.4.20</ecNumber>
    </recommendedName>
    <alternativeName>
        <fullName evidence="1">7-cyano-7-carbaguanine synthase</fullName>
    </alternativeName>
    <alternativeName>
        <fullName evidence="1">Archaeosine biosynthesis protein QueC</fullName>
    </alternativeName>
    <alternativeName>
        <fullName evidence="1">PreQ(0) synthase</fullName>
    </alternativeName>
</protein>
<comment type="function">
    <text evidence="1">Catalyzes the ATP-dependent conversion of 7-carboxy-7-deazaguanine (CDG) to 7-cyano-7-deazaguanine (preQ(0)).</text>
</comment>
<comment type="catalytic activity">
    <reaction evidence="1">
        <text>7-carboxy-7-deazaguanine + NH4(+) + ATP = 7-cyano-7-deazaguanine + ADP + phosphate + H2O + H(+)</text>
        <dbReference type="Rhea" id="RHEA:27982"/>
        <dbReference type="ChEBI" id="CHEBI:15377"/>
        <dbReference type="ChEBI" id="CHEBI:15378"/>
        <dbReference type="ChEBI" id="CHEBI:28938"/>
        <dbReference type="ChEBI" id="CHEBI:30616"/>
        <dbReference type="ChEBI" id="CHEBI:43474"/>
        <dbReference type="ChEBI" id="CHEBI:45075"/>
        <dbReference type="ChEBI" id="CHEBI:61036"/>
        <dbReference type="ChEBI" id="CHEBI:456216"/>
        <dbReference type="EC" id="6.3.4.20"/>
    </reaction>
</comment>
<comment type="cofactor">
    <cofactor evidence="1">
        <name>Zn(2+)</name>
        <dbReference type="ChEBI" id="CHEBI:29105"/>
    </cofactor>
    <text evidence="1">Binds 1 zinc ion per subunit.</text>
</comment>
<comment type="pathway">
    <text evidence="1">Purine metabolism; 7-cyano-7-deazaguanine biosynthesis.</text>
</comment>
<comment type="similarity">
    <text evidence="1">Belongs to the QueC family.</text>
</comment>
<name>QUEC_META3</name>
<gene>
    <name evidence="1" type="primary">queC</name>
    <name type="ordered locus">Maeo_0772</name>
</gene>
<organism>
    <name type="scientific">Methanococcus aeolicus (strain ATCC BAA-1280 / DSM 17508 / OCM 812 / Nankai-3)</name>
    <dbReference type="NCBI Taxonomy" id="419665"/>
    <lineage>
        <taxon>Archaea</taxon>
        <taxon>Methanobacteriati</taxon>
        <taxon>Methanobacteriota</taxon>
        <taxon>Methanomada group</taxon>
        <taxon>Methanococci</taxon>
        <taxon>Methanococcales</taxon>
        <taxon>Methanococcaceae</taxon>
        <taxon>Methanococcus</taxon>
    </lineage>
</organism>
<feature type="chain" id="PRO_1000069777" description="7-cyano-7-deazaguanine synthase">
    <location>
        <begin position="1"/>
        <end position="234"/>
    </location>
</feature>
<feature type="binding site" evidence="1">
    <location>
        <begin position="7"/>
        <end position="17"/>
    </location>
    <ligand>
        <name>ATP</name>
        <dbReference type="ChEBI" id="CHEBI:30616"/>
    </ligand>
</feature>
<feature type="binding site" evidence="1">
    <location>
        <position position="197"/>
    </location>
    <ligand>
        <name>Zn(2+)</name>
        <dbReference type="ChEBI" id="CHEBI:29105"/>
    </ligand>
</feature>
<feature type="binding site" evidence="1">
    <location>
        <position position="208"/>
    </location>
    <ligand>
        <name>Zn(2+)</name>
        <dbReference type="ChEBI" id="CHEBI:29105"/>
    </ligand>
</feature>
<feature type="binding site" evidence="1">
    <location>
        <position position="211"/>
    </location>
    <ligand>
        <name>Zn(2+)</name>
        <dbReference type="ChEBI" id="CHEBI:29105"/>
    </ligand>
</feature>
<feature type="binding site" evidence="1">
    <location>
        <position position="214"/>
    </location>
    <ligand>
        <name>Zn(2+)</name>
        <dbReference type="ChEBI" id="CHEBI:29105"/>
    </ligand>
</feature>
<sequence length="234" mass="26543">MKAVCVLSGGLDSAVCMAMAKSEGLELYSITFDYGQRAVKKEIIASKKLSELFGAVHKVVELPFVKDFSSSALTKKEEEVPTIKNSELDNLEKATETMEKVWVPARNMILFSISSGFAEFVDAKYIYTGLNVEEGATFPDNTEEFLNRFNSVLEYGTLNKVKMKSPLYKYSKKEIVKIGKKLEEKLNVEFLKYSYSCYHDNKTDFLHCGTCESCMRRKRAFKEAGVEDPTEYIL</sequence>
<dbReference type="EC" id="6.3.4.20" evidence="1"/>
<dbReference type="EMBL" id="CP000743">
    <property type="protein sequence ID" value="ABR56355.1"/>
    <property type="molecule type" value="Genomic_DNA"/>
</dbReference>
<dbReference type="RefSeq" id="WP_011973487.1">
    <property type="nucleotide sequence ID" value="NC_009635.1"/>
</dbReference>
<dbReference type="SMR" id="A6UV33"/>
<dbReference type="STRING" id="419665.Maeo_0772"/>
<dbReference type="GeneID" id="5327697"/>
<dbReference type="GeneID" id="75305851"/>
<dbReference type="KEGG" id="mae:Maeo_0772"/>
<dbReference type="eggNOG" id="arCOG00039">
    <property type="taxonomic scope" value="Archaea"/>
</dbReference>
<dbReference type="HOGENOM" id="CLU_081854_1_1_2"/>
<dbReference type="OrthoDB" id="6532at2157"/>
<dbReference type="UniPathway" id="UPA00391"/>
<dbReference type="Proteomes" id="UP000001106">
    <property type="component" value="Chromosome"/>
</dbReference>
<dbReference type="GO" id="GO:0005524">
    <property type="term" value="F:ATP binding"/>
    <property type="evidence" value="ECO:0007669"/>
    <property type="project" value="UniProtKB-UniRule"/>
</dbReference>
<dbReference type="GO" id="GO:0016879">
    <property type="term" value="F:ligase activity, forming carbon-nitrogen bonds"/>
    <property type="evidence" value="ECO:0007669"/>
    <property type="project" value="UniProtKB-UniRule"/>
</dbReference>
<dbReference type="GO" id="GO:0008270">
    <property type="term" value="F:zinc ion binding"/>
    <property type="evidence" value="ECO:0007669"/>
    <property type="project" value="UniProtKB-UniRule"/>
</dbReference>
<dbReference type="CDD" id="cd01995">
    <property type="entry name" value="QueC-like"/>
    <property type="match status" value="1"/>
</dbReference>
<dbReference type="Gene3D" id="3.40.50.620">
    <property type="entry name" value="HUPs"/>
    <property type="match status" value="1"/>
</dbReference>
<dbReference type="HAMAP" id="MF_01633">
    <property type="entry name" value="QueC"/>
    <property type="match status" value="1"/>
</dbReference>
<dbReference type="InterPro" id="IPR018317">
    <property type="entry name" value="QueC"/>
</dbReference>
<dbReference type="InterPro" id="IPR014729">
    <property type="entry name" value="Rossmann-like_a/b/a_fold"/>
</dbReference>
<dbReference type="NCBIfam" id="TIGR00364">
    <property type="entry name" value="7-cyano-7-deazaguanine synthase QueC"/>
    <property type="match status" value="1"/>
</dbReference>
<dbReference type="PANTHER" id="PTHR42914">
    <property type="entry name" value="7-CYANO-7-DEAZAGUANINE SYNTHASE"/>
    <property type="match status" value="1"/>
</dbReference>
<dbReference type="PANTHER" id="PTHR42914:SF1">
    <property type="entry name" value="7-CYANO-7-DEAZAGUANINE SYNTHASE"/>
    <property type="match status" value="1"/>
</dbReference>
<dbReference type="Pfam" id="PF06508">
    <property type="entry name" value="QueC"/>
    <property type="match status" value="1"/>
</dbReference>
<dbReference type="PIRSF" id="PIRSF006293">
    <property type="entry name" value="ExsB"/>
    <property type="match status" value="1"/>
</dbReference>
<dbReference type="SUPFAM" id="SSF52402">
    <property type="entry name" value="Adenine nucleotide alpha hydrolases-like"/>
    <property type="match status" value="1"/>
</dbReference>
<evidence type="ECO:0000255" key="1">
    <source>
        <dbReference type="HAMAP-Rule" id="MF_01633"/>
    </source>
</evidence>
<proteinExistence type="inferred from homology"/>
<accession>A6UV33</accession>
<keyword id="KW-0067">ATP-binding</keyword>
<keyword id="KW-0436">Ligase</keyword>
<keyword id="KW-0479">Metal-binding</keyword>
<keyword id="KW-0547">Nucleotide-binding</keyword>
<keyword id="KW-0862">Zinc</keyword>